<accession>Q0BFQ9</accession>
<proteinExistence type="inferred from homology"/>
<gene>
    <name evidence="1" type="primary">bpt</name>
    <name type="ordered locus">Bamb_1456</name>
</gene>
<dbReference type="EC" id="2.3.2.29" evidence="1"/>
<dbReference type="EMBL" id="CP000440">
    <property type="protein sequence ID" value="ABI87014.1"/>
    <property type="molecule type" value="Genomic_DNA"/>
</dbReference>
<dbReference type="RefSeq" id="WP_011656756.1">
    <property type="nucleotide sequence ID" value="NC_008390.1"/>
</dbReference>
<dbReference type="SMR" id="Q0BFQ9"/>
<dbReference type="GeneID" id="93083143"/>
<dbReference type="KEGG" id="bam:Bamb_1456"/>
<dbReference type="PATRIC" id="fig|339670.21.peg.81"/>
<dbReference type="eggNOG" id="COG2935">
    <property type="taxonomic scope" value="Bacteria"/>
</dbReference>
<dbReference type="Proteomes" id="UP000000662">
    <property type="component" value="Chromosome 1"/>
</dbReference>
<dbReference type="GO" id="GO:0005737">
    <property type="term" value="C:cytoplasm"/>
    <property type="evidence" value="ECO:0007669"/>
    <property type="project" value="UniProtKB-SubCell"/>
</dbReference>
<dbReference type="GO" id="GO:0004057">
    <property type="term" value="F:arginyl-tRNA--protein transferase activity"/>
    <property type="evidence" value="ECO:0007669"/>
    <property type="project" value="InterPro"/>
</dbReference>
<dbReference type="GO" id="GO:0008914">
    <property type="term" value="F:leucyl-tRNA--protein transferase activity"/>
    <property type="evidence" value="ECO:0007669"/>
    <property type="project" value="UniProtKB-UniRule"/>
</dbReference>
<dbReference type="GO" id="GO:0071596">
    <property type="term" value="P:ubiquitin-dependent protein catabolic process via the N-end rule pathway"/>
    <property type="evidence" value="ECO:0007669"/>
    <property type="project" value="InterPro"/>
</dbReference>
<dbReference type="HAMAP" id="MF_00689">
    <property type="entry name" value="Bpt"/>
    <property type="match status" value="1"/>
</dbReference>
<dbReference type="InterPro" id="IPR016181">
    <property type="entry name" value="Acyl_CoA_acyltransferase"/>
</dbReference>
<dbReference type="InterPro" id="IPR017138">
    <property type="entry name" value="Asp_Glu_LeuTrfase"/>
</dbReference>
<dbReference type="InterPro" id="IPR030700">
    <property type="entry name" value="N-end_Aminoacyl_Trfase"/>
</dbReference>
<dbReference type="InterPro" id="IPR007472">
    <property type="entry name" value="N-end_Aminoacyl_Trfase_C"/>
</dbReference>
<dbReference type="InterPro" id="IPR007471">
    <property type="entry name" value="N-end_Aminoacyl_Trfase_N"/>
</dbReference>
<dbReference type="NCBIfam" id="NF002341">
    <property type="entry name" value="PRK01305.1-1"/>
    <property type="match status" value="1"/>
</dbReference>
<dbReference type="NCBIfam" id="NF002342">
    <property type="entry name" value="PRK01305.1-3"/>
    <property type="match status" value="1"/>
</dbReference>
<dbReference type="NCBIfam" id="NF002346">
    <property type="entry name" value="PRK01305.2-3"/>
    <property type="match status" value="1"/>
</dbReference>
<dbReference type="PANTHER" id="PTHR21367">
    <property type="entry name" value="ARGININE-TRNA-PROTEIN TRANSFERASE 1"/>
    <property type="match status" value="1"/>
</dbReference>
<dbReference type="PANTHER" id="PTHR21367:SF1">
    <property type="entry name" value="ARGINYL-TRNA--PROTEIN TRANSFERASE 1"/>
    <property type="match status" value="1"/>
</dbReference>
<dbReference type="Pfam" id="PF04377">
    <property type="entry name" value="ATE_C"/>
    <property type="match status" value="1"/>
</dbReference>
<dbReference type="Pfam" id="PF04376">
    <property type="entry name" value="ATE_N"/>
    <property type="match status" value="1"/>
</dbReference>
<dbReference type="PIRSF" id="PIRSF037208">
    <property type="entry name" value="ATE_pro_prd"/>
    <property type="match status" value="1"/>
</dbReference>
<dbReference type="SUPFAM" id="SSF55729">
    <property type="entry name" value="Acyl-CoA N-acyltransferases (Nat)"/>
    <property type="match status" value="1"/>
</dbReference>
<keyword id="KW-0012">Acyltransferase</keyword>
<keyword id="KW-0963">Cytoplasm</keyword>
<keyword id="KW-0808">Transferase</keyword>
<comment type="function">
    <text evidence="1">Functions in the N-end rule pathway of protein degradation where it conjugates Leu from its aminoacyl-tRNA to the N-termini of proteins containing an N-terminal aspartate or glutamate.</text>
</comment>
<comment type="catalytic activity">
    <reaction evidence="1">
        <text>N-terminal L-glutamyl-[protein] + L-leucyl-tRNA(Leu) = N-terminal L-leucyl-L-glutamyl-[protein] + tRNA(Leu) + H(+)</text>
        <dbReference type="Rhea" id="RHEA:50412"/>
        <dbReference type="Rhea" id="RHEA-COMP:9613"/>
        <dbReference type="Rhea" id="RHEA-COMP:9622"/>
        <dbReference type="Rhea" id="RHEA-COMP:12664"/>
        <dbReference type="Rhea" id="RHEA-COMP:12668"/>
        <dbReference type="ChEBI" id="CHEBI:15378"/>
        <dbReference type="ChEBI" id="CHEBI:64721"/>
        <dbReference type="ChEBI" id="CHEBI:78442"/>
        <dbReference type="ChEBI" id="CHEBI:78494"/>
        <dbReference type="ChEBI" id="CHEBI:133041"/>
        <dbReference type="EC" id="2.3.2.29"/>
    </reaction>
</comment>
<comment type="catalytic activity">
    <reaction evidence="1">
        <text>N-terminal L-aspartyl-[protein] + L-leucyl-tRNA(Leu) = N-terminal L-leucyl-L-aspartyl-[protein] + tRNA(Leu) + H(+)</text>
        <dbReference type="Rhea" id="RHEA:50420"/>
        <dbReference type="Rhea" id="RHEA-COMP:9613"/>
        <dbReference type="Rhea" id="RHEA-COMP:9622"/>
        <dbReference type="Rhea" id="RHEA-COMP:12669"/>
        <dbReference type="Rhea" id="RHEA-COMP:12674"/>
        <dbReference type="ChEBI" id="CHEBI:15378"/>
        <dbReference type="ChEBI" id="CHEBI:64720"/>
        <dbReference type="ChEBI" id="CHEBI:78442"/>
        <dbReference type="ChEBI" id="CHEBI:78494"/>
        <dbReference type="ChEBI" id="CHEBI:133042"/>
        <dbReference type="EC" id="2.3.2.29"/>
    </reaction>
</comment>
<comment type="subcellular location">
    <subcellularLocation>
        <location evidence="1">Cytoplasm</location>
    </subcellularLocation>
</comment>
<comment type="similarity">
    <text evidence="1">Belongs to the R-transferase family. Bpt subfamily.</text>
</comment>
<reference key="1">
    <citation type="submission" date="2006-08" db="EMBL/GenBank/DDBJ databases">
        <title>Complete sequence of chromosome 1 of Burkholderia cepacia AMMD.</title>
        <authorList>
            <person name="Copeland A."/>
            <person name="Lucas S."/>
            <person name="Lapidus A."/>
            <person name="Barry K."/>
            <person name="Detter J.C."/>
            <person name="Glavina del Rio T."/>
            <person name="Hammon N."/>
            <person name="Israni S."/>
            <person name="Pitluck S."/>
            <person name="Bruce D."/>
            <person name="Chain P."/>
            <person name="Malfatti S."/>
            <person name="Shin M."/>
            <person name="Vergez L."/>
            <person name="Schmutz J."/>
            <person name="Larimer F."/>
            <person name="Land M."/>
            <person name="Hauser L."/>
            <person name="Kyrpides N."/>
            <person name="Kim E."/>
            <person name="Parke J."/>
            <person name="Coenye T."/>
            <person name="Konstantinidis K."/>
            <person name="Ramette A."/>
            <person name="Tiedje J."/>
            <person name="Richardson P."/>
        </authorList>
    </citation>
    <scope>NUCLEOTIDE SEQUENCE [LARGE SCALE GENOMIC DNA]</scope>
    <source>
        <strain>ATCC BAA-244 / DSM 16087 / CCUG 44356 / LMG 19182 / AMMD</strain>
    </source>
</reference>
<evidence type="ECO:0000255" key="1">
    <source>
        <dbReference type="HAMAP-Rule" id="MF_00689"/>
    </source>
</evidence>
<protein>
    <recommendedName>
        <fullName evidence="1">Aspartate/glutamate leucyltransferase</fullName>
        <ecNumber evidence="1">2.3.2.29</ecNumber>
    </recommendedName>
</protein>
<sequence>MTHPTELPLSPLSALQFYATAPYPCSYLDGRIARSQVATPSHLINSDIYTELVKAGFRRSGVFTYRPYCDGCRACVPVRVPVGAFTPSRTQRRMWKRHRALVATVSPLHYDEEHYALYMRYQSARHAGGGMDRDSRDQYEQFLLQSRINSRLVEFRDLDAPAGEPGKLRMVSMIDILGDGLSSVYTFFEPDDQHTSYGTYNILWQIEQAKSLGLPYVYLGYWIRESPKMAYKANFHPLEGLLDGRWKVLDPDRVELPPVDAALARAPLPGGHSGSG</sequence>
<organism>
    <name type="scientific">Burkholderia ambifaria (strain ATCC BAA-244 / DSM 16087 / CCUG 44356 / LMG 19182 / AMMD)</name>
    <name type="common">Burkholderia cepacia (strain AMMD)</name>
    <dbReference type="NCBI Taxonomy" id="339670"/>
    <lineage>
        <taxon>Bacteria</taxon>
        <taxon>Pseudomonadati</taxon>
        <taxon>Pseudomonadota</taxon>
        <taxon>Betaproteobacteria</taxon>
        <taxon>Burkholderiales</taxon>
        <taxon>Burkholderiaceae</taxon>
        <taxon>Burkholderia</taxon>
        <taxon>Burkholderia cepacia complex</taxon>
    </lineage>
</organism>
<feature type="chain" id="PRO_1000045125" description="Aspartate/glutamate leucyltransferase">
    <location>
        <begin position="1"/>
        <end position="276"/>
    </location>
</feature>
<name>BPT_BURCM</name>